<reference key="1">
    <citation type="submission" date="1997-05" db="EMBL/GenBank/DDBJ databases">
        <authorList>
            <person name="Segarra R.A."/>
            <person name="Iandolo J.J."/>
        </authorList>
    </citation>
    <scope>NUCLEOTIDE SEQUENCE [GENOMIC DNA]</scope>
</reference>
<reference key="2">
    <citation type="book" date="2006" name="Gram positive pathogens, 2nd edition">
        <title>The Staphylococcus aureus NCTC 8325 genome.</title>
        <editorList>
            <person name="Fischetti V."/>
            <person name="Novick R."/>
            <person name="Ferretti J."/>
            <person name="Portnoy D."/>
            <person name="Rood J."/>
        </editorList>
        <authorList>
            <person name="Gillaspy A.F."/>
            <person name="Worrell V."/>
            <person name="Orvis J."/>
            <person name="Roe B.A."/>
            <person name="Dyer D.W."/>
            <person name="Iandolo J.J."/>
        </authorList>
    </citation>
    <scope>NUCLEOTIDE SEQUENCE [LARGE SCALE GENOMIC DNA]</scope>
    <source>
        <strain>NCTC 8325 / PS 47</strain>
    </source>
</reference>
<evidence type="ECO:0000250" key="1"/>
<evidence type="ECO:0000255" key="2">
    <source>
        <dbReference type="HAMAP-Rule" id="MF_00736"/>
    </source>
</evidence>
<evidence type="ECO:0000305" key="3"/>
<gene>
    <name evidence="2" type="primary">rplK</name>
    <name type="ordered locus">SAOUHSC_00518</name>
</gene>
<organism>
    <name type="scientific">Staphylococcus aureus (strain NCTC 8325 / PS 47)</name>
    <dbReference type="NCBI Taxonomy" id="93061"/>
    <lineage>
        <taxon>Bacteria</taxon>
        <taxon>Bacillati</taxon>
        <taxon>Bacillota</taxon>
        <taxon>Bacilli</taxon>
        <taxon>Bacillales</taxon>
        <taxon>Staphylococcaceae</taxon>
        <taxon>Staphylococcus</taxon>
    </lineage>
</organism>
<keyword id="KW-0488">Methylation</keyword>
<keyword id="KW-1185">Reference proteome</keyword>
<keyword id="KW-0687">Ribonucleoprotein</keyword>
<keyword id="KW-0689">Ribosomal protein</keyword>
<keyword id="KW-0694">RNA-binding</keyword>
<keyword id="KW-0699">rRNA-binding</keyword>
<accession>P0A0F4</accession>
<accession>O06443</accession>
<accession>Q2G0P1</accession>
<proteinExistence type="inferred from homology"/>
<sequence>MAKKVDKVVKLQIPAGKANPAPPVGPALGQAGVNIMGFCKEFNARTQDQAGLIIPVEISVYEDRSFTFITKTPPAPVLLKKAAGIEKGSGEPNKTKVATVTKDQVREIANSKMQDLNAADEEAAMRIIEGTARSMGIVVE</sequence>
<protein>
    <recommendedName>
        <fullName evidence="2">Large ribosomal subunit protein uL11</fullName>
    </recommendedName>
    <alternativeName>
        <fullName evidence="3">50S ribosomal protein L11</fullName>
    </alternativeName>
</protein>
<comment type="function">
    <text evidence="2">Forms part of the ribosomal stalk which helps the ribosome interact with GTP-bound translation factors.</text>
</comment>
<comment type="subunit">
    <text evidence="2">Part of the ribosomal stalk of the 50S ribosomal subunit. Interacts with L10 and the large rRNA to form the base of the stalk. L10 forms an elongated spine to which L12 dimers bind in a sequential fashion forming a multimeric L10(L12)X complex.</text>
</comment>
<comment type="PTM">
    <text evidence="2">One or more lysine residues are methylated.</text>
</comment>
<comment type="similarity">
    <text evidence="2">Belongs to the universal ribosomal protein uL11 family.</text>
</comment>
<dbReference type="EMBL" id="U96619">
    <property type="protein sequence ID" value="AAB54019.1"/>
    <property type="molecule type" value="Genomic_DNA"/>
</dbReference>
<dbReference type="EMBL" id="CP000253">
    <property type="protein sequence ID" value="ABD29667.1"/>
    <property type="molecule type" value="Genomic_DNA"/>
</dbReference>
<dbReference type="RefSeq" id="WP_001085792.1">
    <property type="nucleotide sequence ID" value="NZ_LS483365.1"/>
</dbReference>
<dbReference type="RefSeq" id="YP_499091.1">
    <property type="nucleotide sequence ID" value="NC_007795.1"/>
</dbReference>
<dbReference type="SMR" id="P0A0F4"/>
<dbReference type="STRING" id="93061.SAOUHSC_00518"/>
<dbReference type="PaxDb" id="1280-SAXN108_0591"/>
<dbReference type="GeneID" id="3920372"/>
<dbReference type="GeneID" id="98344871"/>
<dbReference type="KEGG" id="sao:SAOUHSC_00518"/>
<dbReference type="PATRIC" id="fig|93061.5.peg.465"/>
<dbReference type="eggNOG" id="COG0080">
    <property type="taxonomic scope" value="Bacteria"/>
</dbReference>
<dbReference type="HOGENOM" id="CLU_074237_2_1_9"/>
<dbReference type="OrthoDB" id="9802408at2"/>
<dbReference type="PRO" id="PR:P0A0F4"/>
<dbReference type="Proteomes" id="UP000008816">
    <property type="component" value="Chromosome"/>
</dbReference>
<dbReference type="GO" id="GO:0022625">
    <property type="term" value="C:cytosolic large ribosomal subunit"/>
    <property type="evidence" value="ECO:0000318"/>
    <property type="project" value="GO_Central"/>
</dbReference>
<dbReference type="GO" id="GO:0070180">
    <property type="term" value="F:large ribosomal subunit rRNA binding"/>
    <property type="evidence" value="ECO:0000318"/>
    <property type="project" value="GO_Central"/>
</dbReference>
<dbReference type="GO" id="GO:0003735">
    <property type="term" value="F:structural constituent of ribosome"/>
    <property type="evidence" value="ECO:0000318"/>
    <property type="project" value="GO_Central"/>
</dbReference>
<dbReference type="GO" id="GO:0006412">
    <property type="term" value="P:translation"/>
    <property type="evidence" value="ECO:0000318"/>
    <property type="project" value="GO_Central"/>
</dbReference>
<dbReference type="CDD" id="cd00349">
    <property type="entry name" value="Ribosomal_L11"/>
    <property type="match status" value="1"/>
</dbReference>
<dbReference type="FunFam" id="1.10.10.250:FF:000001">
    <property type="entry name" value="50S ribosomal protein L11"/>
    <property type="match status" value="1"/>
</dbReference>
<dbReference type="FunFam" id="3.30.1550.10:FF:000001">
    <property type="entry name" value="50S ribosomal protein L11"/>
    <property type="match status" value="1"/>
</dbReference>
<dbReference type="Gene3D" id="1.10.10.250">
    <property type="entry name" value="Ribosomal protein L11, C-terminal domain"/>
    <property type="match status" value="1"/>
</dbReference>
<dbReference type="Gene3D" id="3.30.1550.10">
    <property type="entry name" value="Ribosomal protein L11/L12, N-terminal domain"/>
    <property type="match status" value="1"/>
</dbReference>
<dbReference type="HAMAP" id="MF_00736">
    <property type="entry name" value="Ribosomal_uL11"/>
    <property type="match status" value="1"/>
</dbReference>
<dbReference type="InterPro" id="IPR000911">
    <property type="entry name" value="Ribosomal_uL11"/>
</dbReference>
<dbReference type="InterPro" id="IPR006519">
    <property type="entry name" value="Ribosomal_uL11_bac-typ"/>
</dbReference>
<dbReference type="InterPro" id="IPR020783">
    <property type="entry name" value="Ribosomal_uL11_C"/>
</dbReference>
<dbReference type="InterPro" id="IPR036769">
    <property type="entry name" value="Ribosomal_uL11_C_sf"/>
</dbReference>
<dbReference type="InterPro" id="IPR020785">
    <property type="entry name" value="Ribosomal_uL11_CS"/>
</dbReference>
<dbReference type="InterPro" id="IPR020784">
    <property type="entry name" value="Ribosomal_uL11_N"/>
</dbReference>
<dbReference type="InterPro" id="IPR036796">
    <property type="entry name" value="Ribosomal_uL11_N_sf"/>
</dbReference>
<dbReference type="NCBIfam" id="TIGR01632">
    <property type="entry name" value="L11_bact"/>
    <property type="match status" value="1"/>
</dbReference>
<dbReference type="PANTHER" id="PTHR11661">
    <property type="entry name" value="60S RIBOSOMAL PROTEIN L12"/>
    <property type="match status" value="1"/>
</dbReference>
<dbReference type="PANTHER" id="PTHR11661:SF1">
    <property type="entry name" value="LARGE RIBOSOMAL SUBUNIT PROTEIN UL11M"/>
    <property type="match status" value="1"/>
</dbReference>
<dbReference type="Pfam" id="PF00298">
    <property type="entry name" value="Ribosomal_L11"/>
    <property type="match status" value="1"/>
</dbReference>
<dbReference type="Pfam" id="PF03946">
    <property type="entry name" value="Ribosomal_L11_N"/>
    <property type="match status" value="1"/>
</dbReference>
<dbReference type="SMART" id="SM00649">
    <property type="entry name" value="RL11"/>
    <property type="match status" value="1"/>
</dbReference>
<dbReference type="SUPFAM" id="SSF54747">
    <property type="entry name" value="Ribosomal L11/L12e N-terminal domain"/>
    <property type="match status" value="1"/>
</dbReference>
<dbReference type="SUPFAM" id="SSF46906">
    <property type="entry name" value="Ribosomal protein L11, C-terminal domain"/>
    <property type="match status" value="1"/>
</dbReference>
<dbReference type="PROSITE" id="PS00359">
    <property type="entry name" value="RIBOSOMAL_L11"/>
    <property type="match status" value="1"/>
</dbReference>
<name>RL11_STAA8</name>
<feature type="initiator methionine" description="Removed" evidence="1">
    <location>
        <position position="1"/>
    </location>
</feature>
<feature type="chain" id="PRO_0000104364" description="Large ribosomal subunit protein uL11">
    <location>
        <begin position="2"/>
        <end position="140"/>
    </location>
</feature>